<feature type="chain" id="PRO_0000203105" description="TMEM14 protein homolog YJR085C">
    <location>
        <begin position="1"/>
        <end position="105"/>
    </location>
</feature>
<feature type="transmembrane region" description="Helical" evidence="1">
    <location>
        <begin position="26"/>
        <end position="46"/>
    </location>
</feature>
<feature type="transmembrane region" description="Helical" evidence="1">
    <location>
        <begin position="53"/>
        <end position="73"/>
    </location>
</feature>
<feature type="transmembrane region" description="Helical" evidence="1">
    <location>
        <begin position="77"/>
        <end position="97"/>
    </location>
</feature>
<protein>
    <recommendedName>
        <fullName>TMEM14 protein homolog YJR085C</fullName>
    </recommendedName>
</protein>
<comment type="subcellular location">
    <subcellularLocation>
        <location evidence="3">Mitochondrion</location>
    </subcellularLocation>
    <subcellularLocation>
        <location evidence="5">Membrane</location>
        <topology evidence="5">Multi-pass membrane protein</topology>
    </subcellularLocation>
</comment>
<comment type="induction">
    <text evidence="4">By the DNA-damaging agent methyl methanesulphonate (MMS) (at protein level).</text>
</comment>
<comment type="miscellaneous">
    <text evidence="2">Present with 2100 molecules/cell in log phase SD medium.</text>
</comment>
<comment type="similarity">
    <text evidence="5">Belongs to the TMEM14 family.</text>
</comment>
<proteinExistence type="evidence at protein level"/>
<name>YJ55_YEAST</name>
<evidence type="ECO:0000255" key="1"/>
<evidence type="ECO:0000269" key="2">
    <source>
    </source>
</evidence>
<evidence type="ECO:0000269" key="3">
    <source>
    </source>
</evidence>
<evidence type="ECO:0000269" key="4">
    <source>
    </source>
</evidence>
<evidence type="ECO:0000305" key="5"/>
<sequence>MEHPAYTLSLLTTAGGLMGYYRKGSIPSLVSGLVFGSVYGIAGYLLHMNRDGGLEMALGASTLLLGAGVIRGMPSRFTKPVPVVLTALGGLGSYYYYNKYKEFYP</sequence>
<accession>P47131</accession>
<accession>D6VWQ4</accession>
<keyword id="KW-0472">Membrane</keyword>
<keyword id="KW-0496">Mitochondrion</keyword>
<keyword id="KW-1185">Reference proteome</keyword>
<keyword id="KW-0812">Transmembrane</keyword>
<keyword id="KW-1133">Transmembrane helix</keyword>
<dbReference type="EMBL" id="Z49585">
    <property type="protein sequence ID" value="CAA89612.1"/>
    <property type="molecule type" value="Genomic_DNA"/>
</dbReference>
<dbReference type="EMBL" id="L47993">
    <property type="protein sequence ID" value="AAB39308.1"/>
    <property type="molecule type" value="Genomic_DNA"/>
</dbReference>
<dbReference type="EMBL" id="AY557887">
    <property type="protein sequence ID" value="AAS56213.1"/>
    <property type="molecule type" value="Genomic_DNA"/>
</dbReference>
<dbReference type="EMBL" id="BK006943">
    <property type="protein sequence ID" value="DAA08870.1"/>
    <property type="molecule type" value="Genomic_DNA"/>
</dbReference>
<dbReference type="PIR" id="S57104">
    <property type="entry name" value="S57104"/>
</dbReference>
<dbReference type="SMR" id="P47131"/>
<dbReference type="BioGRID" id="33840">
    <property type="interactions" value="207"/>
</dbReference>
<dbReference type="FunCoup" id="P47131">
    <property type="interactions" value="79"/>
</dbReference>
<dbReference type="IntAct" id="P47131">
    <property type="interactions" value="2"/>
</dbReference>
<dbReference type="MINT" id="P47131"/>
<dbReference type="STRING" id="4932.YJR085C"/>
<dbReference type="PaxDb" id="4932-YJR085C"/>
<dbReference type="PeptideAtlas" id="P47131"/>
<dbReference type="TopDownProteomics" id="P47131"/>
<dbReference type="EnsemblFungi" id="YJR085C_mRNA">
    <property type="protein sequence ID" value="YJR085C"/>
    <property type="gene ID" value="YJR085C"/>
</dbReference>
<dbReference type="KEGG" id="sce:YJR085C"/>
<dbReference type="AGR" id="SGD:S000003845"/>
<dbReference type="SGD" id="S000003845">
    <property type="gene designation" value="YJR085C"/>
</dbReference>
<dbReference type="VEuPathDB" id="FungiDB:YJR085C"/>
<dbReference type="eggNOG" id="KOG4267">
    <property type="taxonomic scope" value="Eukaryota"/>
</dbReference>
<dbReference type="HOGENOM" id="CLU_096652_3_1_1"/>
<dbReference type="InParanoid" id="P47131"/>
<dbReference type="OMA" id="AYPAYIM"/>
<dbReference type="OrthoDB" id="5620at2759"/>
<dbReference type="BioCyc" id="YEAST:G3O-31713-MONOMER"/>
<dbReference type="BioGRID-ORCS" id="853547">
    <property type="hits" value="2 hits in 10 CRISPR screens"/>
</dbReference>
<dbReference type="PRO" id="PR:P47131"/>
<dbReference type="Proteomes" id="UP000002311">
    <property type="component" value="Chromosome X"/>
</dbReference>
<dbReference type="RNAct" id="P47131">
    <property type="molecule type" value="protein"/>
</dbReference>
<dbReference type="GO" id="GO:0016020">
    <property type="term" value="C:membrane"/>
    <property type="evidence" value="ECO:0007669"/>
    <property type="project" value="UniProtKB-SubCell"/>
</dbReference>
<dbReference type="GO" id="GO:0005739">
    <property type="term" value="C:mitochondrion"/>
    <property type="evidence" value="ECO:0007005"/>
    <property type="project" value="SGD"/>
</dbReference>
<dbReference type="FunFam" id="1.10.10.1740:FF:000004">
    <property type="entry name" value="YJR085C-like protein"/>
    <property type="match status" value="1"/>
</dbReference>
<dbReference type="Gene3D" id="1.10.10.1740">
    <property type="entry name" value="Transmembrane protein 14-like"/>
    <property type="match status" value="1"/>
</dbReference>
<dbReference type="InterPro" id="IPR005349">
    <property type="entry name" value="TMEM14"/>
</dbReference>
<dbReference type="InterPro" id="IPR044890">
    <property type="entry name" value="TMEM14_sf"/>
</dbReference>
<dbReference type="PANTHER" id="PTHR12668:SF53">
    <property type="entry name" value="TMEM14 PROTEIN HOMOLOG YJR085C"/>
    <property type="match status" value="1"/>
</dbReference>
<dbReference type="PANTHER" id="PTHR12668">
    <property type="entry name" value="TRANSMEMBRANE PROTEIN 14, 15"/>
    <property type="match status" value="1"/>
</dbReference>
<dbReference type="Pfam" id="PF03647">
    <property type="entry name" value="Tmemb_14"/>
    <property type="match status" value="1"/>
</dbReference>
<gene>
    <name type="ordered locus">YJR085C</name>
    <name type="ORF">J1863</name>
</gene>
<organism>
    <name type="scientific">Saccharomyces cerevisiae (strain ATCC 204508 / S288c)</name>
    <name type="common">Baker's yeast</name>
    <dbReference type="NCBI Taxonomy" id="559292"/>
    <lineage>
        <taxon>Eukaryota</taxon>
        <taxon>Fungi</taxon>
        <taxon>Dikarya</taxon>
        <taxon>Ascomycota</taxon>
        <taxon>Saccharomycotina</taxon>
        <taxon>Saccharomycetes</taxon>
        <taxon>Saccharomycetales</taxon>
        <taxon>Saccharomycetaceae</taxon>
        <taxon>Saccharomyces</taxon>
    </lineage>
</organism>
<reference key="1">
    <citation type="journal article" date="1996" name="Yeast">
        <title>Analysis of a 62 kb DNA sequence of chromosome X reveals 36 open reading frames and a gene cluster with a counterpart on chromosome XI.</title>
        <authorList>
            <person name="Huang M.-E."/>
            <person name="Manus V."/>
            <person name="Chuat J.-C."/>
            <person name="Galibert F."/>
        </authorList>
    </citation>
    <scope>NUCLEOTIDE SEQUENCE [GENOMIC DNA]</scope>
    <source>
        <strain>ATCC 204508 / S288c</strain>
    </source>
</reference>
<reference key="2">
    <citation type="journal article" date="1996" name="EMBO J.">
        <title>Complete nucleotide sequence of Saccharomyces cerevisiae chromosome X.</title>
        <authorList>
            <person name="Galibert F."/>
            <person name="Alexandraki D."/>
            <person name="Baur A."/>
            <person name="Boles E."/>
            <person name="Chalwatzis N."/>
            <person name="Chuat J.-C."/>
            <person name="Coster F."/>
            <person name="Cziepluch C."/>
            <person name="de Haan M."/>
            <person name="Domdey H."/>
            <person name="Durand P."/>
            <person name="Entian K.-D."/>
            <person name="Gatius M."/>
            <person name="Goffeau A."/>
            <person name="Grivell L.A."/>
            <person name="Hennemann A."/>
            <person name="Herbert C.J."/>
            <person name="Heumann K."/>
            <person name="Hilger F."/>
            <person name="Hollenberg C.P."/>
            <person name="Huang M.-E."/>
            <person name="Jacq C."/>
            <person name="Jauniaux J.-C."/>
            <person name="Katsoulou C."/>
            <person name="Kirchrath L."/>
            <person name="Kleine K."/>
            <person name="Kordes E."/>
            <person name="Koetter P."/>
            <person name="Liebl S."/>
            <person name="Louis E.J."/>
            <person name="Manus V."/>
            <person name="Mewes H.-W."/>
            <person name="Miosga T."/>
            <person name="Obermaier B."/>
            <person name="Perea J."/>
            <person name="Pohl T.M."/>
            <person name="Portetelle D."/>
            <person name="Pujol A."/>
            <person name="Purnelle B."/>
            <person name="Ramezani Rad M."/>
            <person name="Rasmussen S.W."/>
            <person name="Rose M."/>
            <person name="Rossau R."/>
            <person name="Schaaff-Gerstenschlaeger I."/>
            <person name="Smits P.H.M."/>
            <person name="Scarcez T."/>
            <person name="Soriano N."/>
            <person name="To Van D."/>
            <person name="Tzermia M."/>
            <person name="Van Broekhoven A."/>
            <person name="Vandenbol M."/>
            <person name="Wedler H."/>
            <person name="von Wettstein D."/>
            <person name="Wambutt R."/>
            <person name="Zagulski M."/>
            <person name="Zollner A."/>
            <person name="Karpfinger-Hartl L."/>
        </authorList>
    </citation>
    <scope>NUCLEOTIDE SEQUENCE [LARGE SCALE GENOMIC DNA]</scope>
    <source>
        <strain>ATCC 204508 / S288c</strain>
    </source>
</reference>
<reference key="3">
    <citation type="journal article" date="2014" name="G3 (Bethesda)">
        <title>The reference genome sequence of Saccharomyces cerevisiae: Then and now.</title>
        <authorList>
            <person name="Engel S.R."/>
            <person name="Dietrich F.S."/>
            <person name="Fisk D.G."/>
            <person name="Binkley G."/>
            <person name="Balakrishnan R."/>
            <person name="Costanzo M.C."/>
            <person name="Dwight S.S."/>
            <person name="Hitz B.C."/>
            <person name="Karra K."/>
            <person name="Nash R.S."/>
            <person name="Weng S."/>
            <person name="Wong E.D."/>
            <person name="Lloyd P."/>
            <person name="Skrzypek M.S."/>
            <person name="Miyasato S.R."/>
            <person name="Simison M."/>
            <person name="Cherry J.M."/>
        </authorList>
    </citation>
    <scope>GENOME REANNOTATION</scope>
    <source>
        <strain>ATCC 204508 / S288c</strain>
    </source>
</reference>
<reference key="4">
    <citation type="journal article" date="2007" name="Genome Res.">
        <title>Approaching a complete repository of sequence-verified protein-encoding clones for Saccharomyces cerevisiae.</title>
        <authorList>
            <person name="Hu Y."/>
            <person name="Rolfs A."/>
            <person name="Bhullar B."/>
            <person name="Murthy T.V.S."/>
            <person name="Zhu C."/>
            <person name="Berger M.F."/>
            <person name="Camargo A.A."/>
            <person name="Kelley F."/>
            <person name="McCarron S."/>
            <person name="Jepson D."/>
            <person name="Richardson A."/>
            <person name="Raphael J."/>
            <person name="Moreira D."/>
            <person name="Taycher E."/>
            <person name="Zuo D."/>
            <person name="Mohr S."/>
            <person name="Kane M.F."/>
            <person name="Williamson J."/>
            <person name="Simpson A.J.G."/>
            <person name="Bulyk M.L."/>
            <person name="Harlow E."/>
            <person name="Marsischky G."/>
            <person name="Kolodner R.D."/>
            <person name="LaBaer J."/>
        </authorList>
    </citation>
    <scope>NUCLEOTIDE SEQUENCE [GENOMIC DNA]</scope>
    <source>
        <strain>ATCC 204508 / S288c</strain>
    </source>
</reference>
<reference key="5">
    <citation type="journal article" date="2003" name="Nature">
        <title>Global analysis of protein expression in yeast.</title>
        <authorList>
            <person name="Ghaemmaghami S."/>
            <person name="Huh W.-K."/>
            <person name="Bower K."/>
            <person name="Howson R.W."/>
            <person name="Belle A."/>
            <person name="Dephoure N."/>
            <person name="O'Shea E.K."/>
            <person name="Weissman J.S."/>
        </authorList>
    </citation>
    <scope>LEVEL OF PROTEIN EXPRESSION [LARGE SCALE ANALYSIS]</scope>
</reference>
<reference key="6">
    <citation type="journal article" date="2003" name="Proc. Natl. Acad. Sci. U.S.A.">
        <title>The proteome of Saccharomyces cerevisiae mitochondria.</title>
        <authorList>
            <person name="Sickmann A."/>
            <person name="Reinders J."/>
            <person name="Wagner Y."/>
            <person name="Joppich C."/>
            <person name="Zahedi R.P."/>
            <person name="Meyer H.E."/>
            <person name="Schoenfisch B."/>
            <person name="Perschil I."/>
            <person name="Chacinska A."/>
            <person name="Guiard B."/>
            <person name="Rehling P."/>
            <person name="Pfanner N."/>
            <person name="Meisinger C."/>
        </authorList>
    </citation>
    <scope>SUBCELLULAR LOCATION [LARGE SCALE ANALYSIS]</scope>
    <source>
        <strain>ATCC 76625 / YPH499</strain>
    </source>
</reference>
<reference key="7">
    <citation type="journal article" date="2007" name="Yeast">
        <title>Global protein expression profiling of budding yeast in response to DNA damage.</title>
        <authorList>
            <person name="Lee M.-W."/>
            <person name="Kim B.-J."/>
            <person name="Choi H.-K."/>
            <person name="Ryu M.-J."/>
            <person name="Kim S.-B."/>
            <person name="Kang K.-M."/>
            <person name="Cho E.-J."/>
            <person name="Youn H.-D."/>
            <person name="Huh W.-K."/>
            <person name="Kim S.-T."/>
        </authorList>
    </citation>
    <scope>INDUCTION</scope>
</reference>